<proteinExistence type="inferred from homology"/>
<accession>Q1AWK3</accession>
<feature type="chain" id="PRO_0000367213" description="UPF0173 metal-dependent hydrolase Rxyl_1261">
    <location>
        <begin position="1"/>
        <end position="242"/>
    </location>
</feature>
<evidence type="ECO:0000255" key="1">
    <source>
        <dbReference type="HAMAP-Rule" id="MF_00457"/>
    </source>
</evidence>
<dbReference type="EMBL" id="CP000386">
    <property type="protein sequence ID" value="ABG04225.1"/>
    <property type="molecule type" value="Genomic_DNA"/>
</dbReference>
<dbReference type="RefSeq" id="WP_011564242.1">
    <property type="nucleotide sequence ID" value="NC_008148.1"/>
</dbReference>
<dbReference type="SMR" id="Q1AWK3"/>
<dbReference type="STRING" id="266117.Rxyl_1261"/>
<dbReference type="KEGG" id="rxy:Rxyl_1261"/>
<dbReference type="eggNOG" id="COG2220">
    <property type="taxonomic scope" value="Bacteria"/>
</dbReference>
<dbReference type="HOGENOM" id="CLU_070010_4_0_11"/>
<dbReference type="OrthoDB" id="9789133at2"/>
<dbReference type="PhylomeDB" id="Q1AWK3"/>
<dbReference type="Proteomes" id="UP000006637">
    <property type="component" value="Chromosome"/>
</dbReference>
<dbReference type="GO" id="GO:0016787">
    <property type="term" value="F:hydrolase activity"/>
    <property type="evidence" value="ECO:0007669"/>
    <property type="project" value="UniProtKB-UniRule"/>
</dbReference>
<dbReference type="Gene3D" id="3.60.15.10">
    <property type="entry name" value="Ribonuclease Z/Hydroxyacylglutathione hydrolase-like"/>
    <property type="match status" value="1"/>
</dbReference>
<dbReference type="HAMAP" id="MF_00457">
    <property type="entry name" value="UPF0173"/>
    <property type="match status" value="1"/>
</dbReference>
<dbReference type="InterPro" id="IPR001279">
    <property type="entry name" value="Metallo-B-lactamas"/>
</dbReference>
<dbReference type="InterPro" id="IPR036866">
    <property type="entry name" value="RibonucZ/Hydroxyglut_hydro"/>
</dbReference>
<dbReference type="InterPro" id="IPR022877">
    <property type="entry name" value="UPF0173"/>
</dbReference>
<dbReference type="InterPro" id="IPR050114">
    <property type="entry name" value="UPF0173_UPF0282_UlaG_hydrolase"/>
</dbReference>
<dbReference type="NCBIfam" id="NF001911">
    <property type="entry name" value="PRK00685.1"/>
    <property type="match status" value="1"/>
</dbReference>
<dbReference type="PANTHER" id="PTHR43546:SF3">
    <property type="entry name" value="UPF0173 METAL-DEPENDENT HYDROLASE MJ1163"/>
    <property type="match status" value="1"/>
</dbReference>
<dbReference type="PANTHER" id="PTHR43546">
    <property type="entry name" value="UPF0173 METAL-DEPENDENT HYDROLASE MJ1163-RELATED"/>
    <property type="match status" value="1"/>
</dbReference>
<dbReference type="Pfam" id="PF12706">
    <property type="entry name" value="Lactamase_B_2"/>
    <property type="match status" value="1"/>
</dbReference>
<dbReference type="SMART" id="SM00849">
    <property type="entry name" value="Lactamase_B"/>
    <property type="match status" value="1"/>
</dbReference>
<dbReference type="SUPFAM" id="SSF56281">
    <property type="entry name" value="Metallo-hydrolase/oxidoreductase"/>
    <property type="match status" value="1"/>
</dbReference>
<reference key="1">
    <citation type="submission" date="2006-06" db="EMBL/GenBank/DDBJ databases">
        <title>Complete sequence of Rubrobacter xylanophilus DSM 9941.</title>
        <authorList>
            <consortium name="US DOE Joint Genome Institute"/>
            <person name="Copeland A."/>
            <person name="Lucas S."/>
            <person name="Lapidus A."/>
            <person name="Barry K."/>
            <person name="Detter J.C."/>
            <person name="Glavina del Rio T."/>
            <person name="Hammon N."/>
            <person name="Israni S."/>
            <person name="Dalin E."/>
            <person name="Tice H."/>
            <person name="Pitluck S."/>
            <person name="Munk A.C."/>
            <person name="Brettin T."/>
            <person name="Bruce D."/>
            <person name="Han C."/>
            <person name="Tapia R."/>
            <person name="Gilna P."/>
            <person name="Schmutz J."/>
            <person name="Larimer F."/>
            <person name="Land M."/>
            <person name="Hauser L."/>
            <person name="Kyrpides N."/>
            <person name="Lykidis A."/>
            <person name="da Costa M.S."/>
            <person name="Rainey F.A."/>
            <person name="Empadinhas N."/>
            <person name="Jolivet E."/>
            <person name="Battista J.R."/>
            <person name="Richardson P."/>
        </authorList>
    </citation>
    <scope>NUCLEOTIDE SEQUENCE [LARGE SCALE GENOMIC DNA]</scope>
    <source>
        <strain>DSM 9941 / JCM 11954 / NBRC 16129 / PRD-1</strain>
    </source>
</reference>
<protein>
    <recommendedName>
        <fullName evidence="1">UPF0173 metal-dependent hydrolase Rxyl_1261</fullName>
    </recommendedName>
</protein>
<sequence length="242" mass="26104">MVQEMLGGTRITYLGHATFRLTTPGGENILIDPFLADNPQTPEELKQVGDLDTILVTHGHFDHFADAIPVARQTGATVVANFEISSYVQSQGIENSMPLNKGGTARVGGVKVTGTNAFHASSIQTEDGSTIYGGEPMGFVVEFESGFKVYHAGDTAVFGDMRLIGELYGPDLALLPIGDRVVMSPFEAAHAARLLGVRHVVPMHYGTFPFLPGTPEEFERHARELGLELEIHVMKPGEELGS</sequence>
<gene>
    <name type="ordered locus">Rxyl_1261</name>
</gene>
<comment type="similarity">
    <text evidence="1">Belongs to the UPF0173 family.</text>
</comment>
<keyword id="KW-0378">Hydrolase</keyword>
<keyword id="KW-1185">Reference proteome</keyword>
<name>Y1261_RUBXD</name>
<organism>
    <name type="scientific">Rubrobacter xylanophilus (strain DSM 9941 / JCM 11954 / NBRC 16129 / PRD-1)</name>
    <dbReference type="NCBI Taxonomy" id="266117"/>
    <lineage>
        <taxon>Bacteria</taxon>
        <taxon>Bacillati</taxon>
        <taxon>Actinomycetota</taxon>
        <taxon>Rubrobacteria</taxon>
        <taxon>Rubrobacterales</taxon>
        <taxon>Rubrobacteraceae</taxon>
        <taxon>Rubrobacter</taxon>
    </lineage>
</organism>